<evidence type="ECO:0000255" key="1">
    <source>
        <dbReference type="HAMAP-Rule" id="MF_01098"/>
    </source>
</evidence>
<organism>
    <name type="scientific">Methanococcus vannielii (strain ATCC 35089 / DSM 1224 / JCM 13029 / OCM 148 / SB)</name>
    <dbReference type="NCBI Taxonomy" id="406327"/>
    <lineage>
        <taxon>Archaea</taxon>
        <taxon>Methanobacteriati</taxon>
        <taxon>Methanobacteriota</taxon>
        <taxon>Methanomada group</taxon>
        <taxon>Methanococci</taxon>
        <taxon>Methanococcales</taxon>
        <taxon>Methanococcaceae</taxon>
        <taxon>Methanococcus</taxon>
    </lineage>
</organism>
<gene>
    <name evidence="1" type="primary">mtrE</name>
    <name type="ordered locus">Mevan_0873</name>
</gene>
<feature type="chain" id="PRO_1000064946" description="Tetrahydromethanopterin S-methyltransferase subunit E">
    <location>
        <begin position="1"/>
        <end position="299"/>
    </location>
</feature>
<feature type="transmembrane region" description="Helical" evidence="1">
    <location>
        <begin position="57"/>
        <end position="77"/>
    </location>
</feature>
<feature type="transmembrane region" description="Helical" evidence="1">
    <location>
        <begin position="80"/>
        <end position="100"/>
    </location>
</feature>
<feature type="transmembrane region" description="Helical" evidence="1">
    <location>
        <begin position="133"/>
        <end position="153"/>
    </location>
</feature>
<feature type="transmembrane region" description="Helical" evidence="1">
    <location>
        <begin position="158"/>
        <end position="178"/>
    </location>
</feature>
<feature type="transmembrane region" description="Helical" evidence="1">
    <location>
        <begin position="237"/>
        <end position="257"/>
    </location>
</feature>
<feature type="transmembrane region" description="Helical" evidence="1">
    <location>
        <begin position="261"/>
        <end position="281"/>
    </location>
</feature>
<proteinExistence type="inferred from homology"/>
<reference key="1">
    <citation type="submission" date="2007-06" db="EMBL/GenBank/DDBJ databases">
        <title>Complete sequence of Methanococcus vannielii SB.</title>
        <authorList>
            <consortium name="US DOE Joint Genome Institute"/>
            <person name="Copeland A."/>
            <person name="Lucas S."/>
            <person name="Lapidus A."/>
            <person name="Barry K."/>
            <person name="Glavina del Rio T."/>
            <person name="Dalin E."/>
            <person name="Tice H."/>
            <person name="Pitluck S."/>
            <person name="Chain P."/>
            <person name="Malfatti S."/>
            <person name="Shin M."/>
            <person name="Vergez L."/>
            <person name="Schmutz J."/>
            <person name="Larimer F."/>
            <person name="Land M."/>
            <person name="Hauser L."/>
            <person name="Kyrpides N."/>
            <person name="Anderson I."/>
            <person name="Sieprawska-Lupa M."/>
            <person name="Whitman W.B."/>
            <person name="Richardson P."/>
        </authorList>
    </citation>
    <scope>NUCLEOTIDE SEQUENCE [LARGE SCALE GENOMIC DNA]</scope>
    <source>
        <strain>ATCC 35089 / DSM 1224 / JCM 13029 / OCM 148 / SB</strain>
    </source>
</reference>
<accession>A6UQK6</accession>
<keyword id="KW-1003">Cell membrane</keyword>
<keyword id="KW-0472">Membrane</keyword>
<keyword id="KW-0484">Methanogenesis</keyword>
<keyword id="KW-0489">Methyltransferase</keyword>
<keyword id="KW-0554">One-carbon metabolism</keyword>
<keyword id="KW-0808">Transferase</keyword>
<keyword id="KW-1278">Translocase</keyword>
<keyword id="KW-0812">Transmembrane</keyword>
<keyword id="KW-1133">Transmembrane helix</keyword>
<comment type="function">
    <text evidence="1">Part of a complex that catalyzes the formation of methyl-coenzyme M and tetrahydromethanopterin from coenzyme M and methyl-tetrahydromethanopterin. This is an energy-conserving, sodium-ion translocating step.</text>
</comment>
<comment type="catalytic activity">
    <reaction evidence="1">
        <text>5-methyl-5,6,7,8-tetrahydromethanopterin + coenzyme M + 2 Na(+)(in) = 5,6,7,8-tetrahydromethanopterin + methyl-coenzyme M + 2 Na(+)(out)</text>
        <dbReference type="Rhea" id="RHEA:53492"/>
        <dbReference type="ChEBI" id="CHEBI:29101"/>
        <dbReference type="ChEBI" id="CHEBI:58103"/>
        <dbReference type="ChEBI" id="CHEBI:58116"/>
        <dbReference type="ChEBI" id="CHEBI:58286"/>
        <dbReference type="ChEBI" id="CHEBI:58319"/>
        <dbReference type="EC" id="7.2.1.4"/>
    </reaction>
</comment>
<comment type="pathway">
    <text evidence="1">One-carbon metabolism; methanogenesis from CO(2); methyl-coenzyme M from 5,10-methylene-5,6,7,8-tetrahydromethanopterin: step 2/2.</text>
</comment>
<comment type="subunit">
    <text evidence="1">The complex is composed of 8 subunits; MtrA, MtrB, MtrC, MtrD, MtrE, MtrF, MtrG and MtrH.</text>
</comment>
<comment type="subcellular location">
    <subcellularLocation>
        <location evidence="1">Cell membrane</location>
        <topology evidence="1">Multi-pass membrane protein</topology>
    </subcellularLocation>
</comment>
<comment type="similarity">
    <text evidence="1">Belongs to the MtrE family.</text>
</comment>
<dbReference type="EC" id="7.2.1.4" evidence="1"/>
<dbReference type="EMBL" id="CP000742">
    <property type="protein sequence ID" value="ABR54778.1"/>
    <property type="molecule type" value="Genomic_DNA"/>
</dbReference>
<dbReference type="RefSeq" id="WP_011972679.1">
    <property type="nucleotide sequence ID" value="NC_009634.1"/>
</dbReference>
<dbReference type="SMR" id="A6UQK6"/>
<dbReference type="STRING" id="406327.Mevan_0873"/>
<dbReference type="GeneID" id="5326187"/>
<dbReference type="KEGG" id="mvn:Mevan_0873"/>
<dbReference type="eggNOG" id="arCOG04870">
    <property type="taxonomic scope" value="Archaea"/>
</dbReference>
<dbReference type="HOGENOM" id="CLU_958513_0_0_2"/>
<dbReference type="OrthoDB" id="82302at2157"/>
<dbReference type="UniPathway" id="UPA00640">
    <property type="reaction ID" value="UER00698"/>
</dbReference>
<dbReference type="Proteomes" id="UP000001107">
    <property type="component" value="Chromosome"/>
</dbReference>
<dbReference type="GO" id="GO:0005737">
    <property type="term" value="C:cytoplasm"/>
    <property type="evidence" value="ECO:0007669"/>
    <property type="project" value="InterPro"/>
</dbReference>
<dbReference type="GO" id="GO:0005886">
    <property type="term" value="C:plasma membrane"/>
    <property type="evidence" value="ECO:0007669"/>
    <property type="project" value="UniProtKB-SubCell"/>
</dbReference>
<dbReference type="GO" id="GO:0012506">
    <property type="term" value="C:vesicle membrane"/>
    <property type="evidence" value="ECO:0007669"/>
    <property type="project" value="InterPro"/>
</dbReference>
<dbReference type="GO" id="GO:0030269">
    <property type="term" value="F:tetrahydromethanopterin S-methyltransferase activity"/>
    <property type="evidence" value="ECO:0007669"/>
    <property type="project" value="UniProtKB-UniRule"/>
</dbReference>
<dbReference type="GO" id="GO:0019386">
    <property type="term" value="P:methanogenesis, from carbon dioxide"/>
    <property type="evidence" value="ECO:0007669"/>
    <property type="project" value="UniProtKB-UniRule"/>
</dbReference>
<dbReference type="GO" id="GO:0032259">
    <property type="term" value="P:methylation"/>
    <property type="evidence" value="ECO:0007669"/>
    <property type="project" value="UniProtKB-KW"/>
</dbReference>
<dbReference type="GO" id="GO:0006730">
    <property type="term" value="P:one-carbon metabolic process"/>
    <property type="evidence" value="ECO:0007669"/>
    <property type="project" value="UniProtKB-UniRule"/>
</dbReference>
<dbReference type="HAMAP" id="MF_01098">
    <property type="entry name" value="MtrE"/>
    <property type="match status" value="1"/>
</dbReference>
<dbReference type="InterPro" id="IPR005780">
    <property type="entry name" value="MeTrfase_E"/>
</dbReference>
<dbReference type="NCBIfam" id="TIGR01113">
    <property type="entry name" value="mtrE"/>
    <property type="match status" value="1"/>
</dbReference>
<dbReference type="Pfam" id="PF04206">
    <property type="entry name" value="MtrE"/>
    <property type="match status" value="1"/>
</dbReference>
<dbReference type="PIRSF" id="PIRSF016509">
    <property type="entry name" value="MtrE"/>
    <property type="match status" value="1"/>
</dbReference>
<name>MTRE_METVS</name>
<protein>
    <recommendedName>
        <fullName evidence="1">Tetrahydromethanopterin S-methyltransferase subunit E</fullName>
        <ecNumber evidence="1">7.2.1.4</ecNumber>
    </recommendedName>
    <alternativeName>
        <fullName evidence="1">N5-methyltetrahydromethanopterin--coenzyme M methyltransferase subunit E</fullName>
    </alternativeName>
</protein>
<sequence>MDPTLISLGALALAGAAATVSGCAEDLESDVGSQSNPNSQVQLGPQMGNIHRYFNKAISGEPVSYGLYVAVAGSVAWALINAGLNAVLALIIGSGVAAIVHGAYSVSAFLGRTVGQSQKFGQPVYMDVLTSHIGPIVGHGFIAVFTMVLAAYLAVTALGNPFPLPLVALIFGITVGAIGSSTGDVHYGAEREYQKYAFGGGIPVANQGDIDIYAEYGIRNGLDSSYFCSRLGGPLTGLCFGLIIFLDGWRSIVGNIIGGDLVTKTSIALVVGLLVVVAAMILNRKIEVFARNKYGPYRN</sequence>